<accession>P08762</accession>
<sequence>MFHCPLCQHAAHARTSRYITDTTKERYHQCQNVNCSATFITYESVQRYIVKPGEVHAVRPHPLPSGQQIMWM</sequence>
<keyword id="KW-0010">Activator</keyword>
<keyword id="KW-0426">Late protein</keyword>
<keyword id="KW-1185">Reference proteome</keyword>
<keyword id="KW-0804">Transcription</keyword>
<keyword id="KW-0805">Transcription regulation</keyword>
<gene>
    <name type="primary">ogr</name>
</gene>
<comment type="function">
    <text>This protein may act as an activator of P2 late transcription through an interaction with the alpha-subunit of the host RNA polymerase.</text>
</comment>
<dbReference type="EMBL" id="X03782">
    <property type="protein sequence ID" value="CAA27414.1"/>
    <property type="molecule type" value="Genomic_DNA"/>
</dbReference>
<dbReference type="EMBL" id="AF063097">
    <property type="protein sequence ID" value="AAD03296.1"/>
    <property type="molecule type" value="Genomic_DNA"/>
</dbReference>
<dbReference type="PIR" id="A24826">
    <property type="entry name" value="WMBP2P"/>
</dbReference>
<dbReference type="RefSeq" id="NP_046785.1">
    <property type="nucleotide sequence ID" value="NC_001895.1"/>
</dbReference>
<dbReference type="SMR" id="P08762"/>
<dbReference type="GeneID" id="77440804"/>
<dbReference type="KEGG" id="vg:77440804"/>
<dbReference type="Proteomes" id="UP000009092">
    <property type="component" value="Genome"/>
</dbReference>
<dbReference type="InterPro" id="IPR007684">
    <property type="entry name" value="Znf_Ogr/Delta"/>
</dbReference>
<dbReference type="NCBIfam" id="NF007241">
    <property type="entry name" value="PRK09678.1"/>
    <property type="match status" value="1"/>
</dbReference>
<dbReference type="Pfam" id="PF04606">
    <property type="entry name" value="Ogr_Delta"/>
    <property type="match status" value="1"/>
</dbReference>
<reference key="1">
    <citation type="journal article" date="1986" name="J. Mol. Biol.">
        <title>Coliphage P2 late control gene ogr. DNA sequence and product identification.</title>
        <authorList>
            <person name="Birkeland N.K."/>
            <person name="Lindqvist B.H."/>
        </authorList>
    </citation>
    <scope>NUCLEOTIDE SEQUENCE [GENOMIC DNA]</scope>
</reference>
<reference key="2">
    <citation type="journal article" date="1986" name="Proc. Natl. Acad. Sci. U.S.A.">
        <title>Regulation of bacteriophage P2 late-gene expression: the ogr gene.</title>
        <authorList>
            <person name="Christie G.E."/>
            <person name="Haggaard-Ljungquist E."/>
            <person name="Feiwell R."/>
            <person name="Calendar R."/>
        </authorList>
    </citation>
    <scope>NUCLEOTIDE SEQUENCE [GENOMIC DNA]</scope>
</reference>
<proteinExistence type="predicted"/>
<organism>
    <name type="scientific">Escherichia phage P2</name>
    <name type="common">Bacteriophage P2</name>
    <dbReference type="NCBI Taxonomy" id="2905681"/>
    <lineage>
        <taxon>Viruses</taxon>
        <taxon>Duplodnaviria</taxon>
        <taxon>Heunggongvirae</taxon>
        <taxon>Uroviricota</taxon>
        <taxon>Caudoviricetes</taxon>
        <taxon>Peduoviridae</taxon>
        <taxon>Peduovirus</taxon>
        <taxon>Peduovirus P2</taxon>
    </lineage>
</organism>
<name>VOGR_BPP2</name>
<feature type="chain" id="PRO_0000165245" description="Late control protein ogr">
    <location>
        <begin position="1"/>
        <end position="72"/>
    </location>
</feature>
<feature type="sequence variant" description="In allele OGR1.">
    <original>Y</original>
    <variation>C</variation>
    <location>
        <position position="42"/>
    </location>
</feature>
<protein>
    <recommendedName>
        <fullName>Late control protein ogr</fullName>
    </recommendedName>
</protein>
<organismHost>
    <name type="scientific">Enterobacteriaceae</name>
    <dbReference type="NCBI Taxonomy" id="543"/>
</organismHost>